<gene>
    <name evidence="1" type="primary">eno</name>
    <name type="ordered locus">LS215_1395</name>
</gene>
<proteinExistence type="inferred from homology"/>
<protein>
    <recommendedName>
        <fullName evidence="1">Enolase</fullName>
        <ecNumber evidence="1">4.2.1.11</ecNumber>
    </recommendedName>
    <alternativeName>
        <fullName evidence="1">2-phospho-D-glycerate hydro-lyase</fullName>
    </alternativeName>
    <alternativeName>
        <fullName evidence="1">2-phosphoglycerate dehydratase</fullName>
    </alternativeName>
</protein>
<accession>C3MPU0</accession>
<evidence type="ECO:0000255" key="1">
    <source>
        <dbReference type="HAMAP-Rule" id="MF_00318"/>
    </source>
</evidence>
<organism>
    <name type="scientific">Saccharolobus islandicus (strain L.S.2.15 / Lassen #1)</name>
    <name type="common">Sulfolobus islandicus</name>
    <dbReference type="NCBI Taxonomy" id="429572"/>
    <lineage>
        <taxon>Archaea</taxon>
        <taxon>Thermoproteota</taxon>
        <taxon>Thermoprotei</taxon>
        <taxon>Sulfolobales</taxon>
        <taxon>Sulfolobaceae</taxon>
        <taxon>Saccharolobus</taxon>
    </lineage>
</organism>
<keyword id="KW-0963">Cytoplasm</keyword>
<keyword id="KW-0324">Glycolysis</keyword>
<keyword id="KW-0456">Lyase</keyword>
<keyword id="KW-0460">Magnesium</keyword>
<keyword id="KW-0479">Metal-binding</keyword>
<keyword id="KW-0964">Secreted</keyword>
<sequence length="419" mass="46652">MINRFSIEKVKGLEIIDSRGNPTIRVFVRTNDGVESFGDAPAGASKGTREAIEVRDENGLTVKRAVDIANYIIDPALHGIDVREQGIIDKILIDIDSTENKSKLGGNTIIATSIAALKTASKALGLEVFKYIAGPRLPKIPIPLLNIINGGLHAGNKLKIQEFIILPIKFNTFKEAFFAAIEVYRNLKGLISERYGKIYTAVGDEGGFSPPLEETREALDLIYTSINNAGYQGKIYMGMDAAASDFYDPKKEKYIIDGKELNPTQLLEFYLDLAKEYPIVYLEDPFEENSFDMFGELQNKLNSTIVTGDDLYTTNIKYLKIGIEKRSTKGVIVKPNQVGTISETFEFTNLARRNSIKLVTSHRSGETEDNFIAEFAVGIESDFIKTGAPARGERTSKYNKLLEIENKFGLEYGGKYFYL</sequence>
<name>ENO_SACI2</name>
<reference key="1">
    <citation type="journal article" date="2009" name="Proc. Natl. Acad. Sci. U.S.A.">
        <title>Biogeography of the Sulfolobus islandicus pan-genome.</title>
        <authorList>
            <person name="Reno M.L."/>
            <person name="Held N.L."/>
            <person name="Fields C.J."/>
            <person name="Burke P.V."/>
            <person name="Whitaker R.J."/>
        </authorList>
    </citation>
    <scope>NUCLEOTIDE SEQUENCE [LARGE SCALE GENOMIC DNA]</scope>
    <source>
        <strain>L.S.2.15 / Lassen #1</strain>
    </source>
</reference>
<feature type="chain" id="PRO_1000205106" description="Enolase">
    <location>
        <begin position="1"/>
        <end position="419"/>
    </location>
</feature>
<feature type="active site" description="Proton donor" evidence="1">
    <location>
        <position position="205"/>
    </location>
</feature>
<feature type="active site" description="Proton acceptor" evidence="1">
    <location>
        <position position="334"/>
    </location>
</feature>
<feature type="binding site" evidence="1">
    <location>
        <position position="161"/>
    </location>
    <ligand>
        <name>(2R)-2-phosphoglycerate</name>
        <dbReference type="ChEBI" id="CHEBI:58289"/>
    </ligand>
</feature>
<feature type="binding site" evidence="1">
    <location>
        <position position="240"/>
    </location>
    <ligand>
        <name>Mg(2+)</name>
        <dbReference type="ChEBI" id="CHEBI:18420"/>
    </ligand>
</feature>
<feature type="binding site" evidence="1">
    <location>
        <position position="283"/>
    </location>
    <ligand>
        <name>Mg(2+)</name>
        <dbReference type="ChEBI" id="CHEBI:18420"/>
    </ligand>
</feature>
<feature type="binding site" evidence="1">
    <location>
        <position position="309"/>
    </location>
    <ligand>
        <name>Mg(2+)</name>
        <dbReference type="ChEBI" id="CHEBI:18420"/>
    </ligand>
</feature>
<feature type="binding site" evidence="1">
    <location>
        <position position="334"/>
    </location>
    <ligand>
        <name>(2R)-2-phosphoglycerate</name>
        <dbReference type="ChEBI" id="CHEBI:58289"/>
    </ligand>
</feature>
<feature type="binding site" evidence="1">
    <location>
        <position position="363"/>
    </location>
    <ligand>
        <name>(2R)-2-phosphoglycerate</name>
        <dbReference type="ChEBI" id="CHEBI:58289"/>
    </ligand>
</feature>
<feature type="binding site" evidence="1">
    <location>
        <position position="364"/>
    </location>
    <ligand>
        <name>(2R)-2-phosphoglycerate</name>
        <dbReference type="ChEBI" id="CHEBI:58289"/>
    </ligand>
</feature>
<feature type="binding site" evidence="1">
    <location>
        <position position="385"/>
    </location>
    <ligand>
        <name>(2R)-2-phosphoglycerate</name>
        <dbReference type="ChEBI" id="CHEBI:58289"/>
    </ligand>
</feature>
<dbReference type="EC" id="4.2.1.11" evidence="1"/>
<dbReference type="EMBL" id="CP001399">
    <property type="protein sequence ID" value="ACP35403.1"/>
    <property type="molecule type" value="Genomic_DNA"/>
</dbReference>
<dbReference type="RefSeq" id="WP_012713671.1">
    <property type="nucleotide sequence ID" value="NC_012589.1"/>
</dbReference>
<dbReference type="SMR" id="C3MPU0"/>
<dbReference type="GeneID" id="7797913"/>
<dbReference type="KEGG" id="sis:LS215_1395"/>
<dbReference type="HOGENOM" id="CLU_031223_2_1_2"/>
<dbReference type="OrthoDB" id="8680at2157"/>
<dbReference type="UniPathway" id="UPA00109">
    <property type="reaction ID" value="UER00187"/>
</dbReference>
<dbReference type="Proteomes" id="UP000001747">
    <property type="component" value="Chromosome"/>
</dbReference>
<dbReference type="GO" id="GO:0009986">
    <property type="term" value="C:cell surface"/>
    <property type="evidence" value="ECO:0007669"/>
    <property type="project" value="UniProtKB-SubCell"/>
</dbReference>
<dbReference type="GO" id="GO:0005576">
    <property type="term" value="C:extracellular region"/>
    <property type="evidence" value="ECO:0007669"/>
    <property type="project" value="UniProtKB-SubCell"/>
</dbReference>
<dbReference type="GO" id="GO:0000015">
    <property type="term" value="C:phosphopyruvate hydratase complex"/>
    <property type="evidence" value="ECO:0007669"/>
    <property type="project" value="InterPro"/>
</dbReference>
<dbReference type="GO" id="GO:0000287">
    <property type="term" value="F:magnesium ion binding"/>
    <property type="evidence" value="ECO:0007669"/>
    <property type="project" value="UniProtKB-UniRule"/>
</dbReference>
<dbReference type="GO" id="GO:0004634">
    <property type="term" value="F:phosphopyruvate hydratase activity"/>
    <property type="evidence" value="ECO:0007669"/>
    <property type="project" value="UniProtKB-UniRule"/>
</dbReference>
<dbReference type="GO" id="GO:0006096">
    <property type="term" value="P:glycolytic process"/>
    <property type="evidence" value="ECO:0007669"/>
    <property type="project" value="UniProtKB-UniRule"/>
</dbReference>
<dbReference type="CDD" id="cd03313">
    <property type="entry name" value="enolase"/>
    <property type="match status" value="1"/>
</dbReference>
<dbReference type="Gene3D" id="3.20.20.120">
    <property type="entry name" value="Enolase-like C-terminal domain"/>
    <property type="match status" value="1"/>
</dbReference>
<dbReference type="Gene3D" id="3.30.390.10">
    <property type="entry name" value="Enolase-like, N-terminal domain"/>
    <property type="match status" value="1"/>
</dbReference>
<dbReference type="HAMAP" id="MF_00318">
    <property type="entry name" value="Enolase"/>
    <property type="match status" value="1"/>
</dbReference>
<dbReference type="InterPro" id="IPR000941">
    <property type="entry name" value="Enolase"/>
</dbReference>
<dbReference type="InterPro" id="IPR036849">
    <property type="entry name" value="Enolase-like_C_sf"/>
</dbReference>
<dbReference type="InterPro" id="IPR029017">
    <property type="entry name" value="Enolase-like_N"/>
</dbReference>
<dbReference type="InterPro" id="IPR020810">
    <property type="entry name" value="Enolase_C"/>
</dbReference>
<dbReference type="InterPro" id="IPR020809">
    <property type="entry name" value="Enolase_CS"/>
</dbReference>
<dbReference type="InterPro" id="IPR020811">
    <property type="entry name" value="Enolase_N"/>
</dbReference>
<dbReference type="NCBIfam" id="TIGR01060">
    <property type="entry name" value="eno"/>
    <property type="match status" value="1"/>
</dbReference>
<dbReference type="PANTHER" id="PTHR11902">
    <property type="entry name" value="ENOLASE"/>
    <property type="match status" value="1"/>
</dbReference>
<dbReference type="PANTHER" id="PTHR11902:SF1">
    <property type="entry name" value="ENOLASE"/>
    <property type="match status" value="1"/>
</dbReference>
<dbReference type="Pfam" id="PF00113">
    <property type="entry name" value="Enolase_C"/>
    <property type="match status" value="1"/>
</dbReference>
<dbReference type="Pfam" id="PF03952">
    <property type="entry name" value="Enolase_N"/>
    <property type="match status" value="1"/>
</dbReference>
<dbReference type="PIRSF" id="PIRSF001400">
    <property type="entry name" value="Enolase"/>
    <property type="match status" value="1"/>
</dbReference>
<dbReference type="PRINTS" id="PR00148">
    <property type="entry name" value="ENOLASE"/>
</dbReference>
<dbReference type="SFLD" id="SFLDS00001">
    <property type="entry name" value="Enolase"/>
    <property type="match status" value="1"/>
</dbReference>
<dbReference type="SFLD" id="SFLDF00002">
    <property type="entry name" value="enolase"/>
    <property type="match status" value="1"/>
</dbReference>
<dbReference type="SMART" id="SM01192">
    <property type="entry name" value="Enolase_C"/>
    <property type="match status" value="1"/>
</dbReference>
<dbReference type="SMART" id="SM01193">
    <property type="entry name" value="Enolase_N"/>
    <property type="match status" value="1"/>
</dbReference>
<dbReference type="SUPFAM" id="SSF51604">
    <property type="entry name" value="Enolase C-terminal domain-like"/>
    <property type="match status" value="1"/>
</dbReference>
<dbReference type="SUPFAM" id="SSF54826">
    <property type="entry name" value="Enolase N-terminal domain-like"/>
    <property type="match status" value="1"/>
</dbReference>
<dbReference type="PROSITE" id="PS00164">
    <property type="entry name" value="ENOLASE"/>
    <property type="match status" value="1"/>
</dbReference>
<comment type="function">
    <text evidence="1">Catalyzes the reversible conversion of 2-phosphoglycerate (2-PG) into phosphoenolpyruvate (PEP). It is essential for the degradation of carbohydrates via glycolysis.</text>
</comment>
<comment type="catalytic activity">
    <reaction evidence="1">
        <text>(2R)-2-phosphoglycerate = phosphoenolpyruvate + H2O</text>
        <dbReference type="Rhea" id="RHEA:10164"/>
        <dbReference type="ChEBI" id="CHEBI:15377"/>
        <dbReference type="ChEBI" id="CHEBI:58289"/>
        <dbReference type="ChEBI" id="CHEBI:58702"/>
        <dbReference type="EC" id="4.2.1.11"/>
    </reaction>
</comment>
<comment type="cofactor">
    <cofactor evidence="1">
        <name>Mg(2+)</name>
        <dbReference type="ChEBI" id="CHEBI:18420"/>
    </cofactor>
    <text evidence="1">Binds a second Mg(2+) ion via substrate during catalysis.</text>
</comment>
<comment type="pathway">
    <text evidence="1">Carbohydrate degradation; glycolysis; pyruvate from D-glyceraldehyde 3-phosphate: step 4/5.</text>
</comment>
<comment type="subcellular location">
    <subcellularLocation>
        <location evidence="1">Cytoplasm</location>
    </subcellularLocation>
    <subcellularLocation>
        <location evidence="1">Secreted</location>
    </subcellularLocation>
    <subcellularLocation>
        <location evidence="1">Cell surface</location>
    </subcellularLocation>
    <text evidence="1">Fractions of enolase are present in both the cytoplasm and on the cell surface.</text>
</comment>
<comment type="similarity">
    <text evidence="1">Belongs to the enolase family.</text>
</comment>